<reference key="1">
    <citation type="journal article" date="2002" name="Genome Res.">
        <title>A complete sequence of the T. tengcongensis genome.</title>
        <authorList>
            <person name="Bao Q."/>
            <person name="Tian Y."/>
            <person name="Li W."/>
            <person name="Xu Z."/>
            <person name="Xuan Z."/>
            <person name="Hu S."/>
            <person name="Dong W."/>
            <person name="Yang J."/>
            <person name="Chen Y."/>
            <person name="Xue Y."/>
            <person name="Xu Y."/>
            <person name="Lai X."/>
            <person name="Huang L."/>
            <person name="Dong X."/>
            <person name="Ma Y."/>
            <person name="Ling L."/>
            <person name="Tan H."/>
            <person name="Chen R."/>
            <person name="Wang J."/>
            <person name="Yu J."/>
            <person name="Yang H."/>
        </authorList>
    </citation>
    <scope>NUCLEOTIDE SEQUENCE [LARGE SCALE GENOMIC DNA]</scope>
    <source>
        <strain>DSM 15242 / JCM 11007 / NBRC 100824 / MB4</strain>
    </source>
</reference>
<dbReference type="EC" id="2.7.2.7" evidence="1"/>
<dbReference type="EMBL" id="AE008691">
    <property type="protein sequence ID" value="AAM25356.1"/>
    <property type="molecule type" value="Genomic_DNA"/>
</dbReference>
<dbReference type="SMR" id="Q8R832"/>
<dbReference type="STRING" id="273068.TTE2201"/>
<dbReference type="KEGG" id="tte:TTE2201"/>
<dbReference type="eggNOG" id="COG3426">
    <property type="taxonomic scope" value="Bacteria"/>
</dbReference>
<dbReference type="HOGENOM" id="CLU_048716_0_0_9"/>
<dbReference type="Proteomes" id="UP000000555">
    <property type="component" value="Chromosome"/>
</dbReference>
<dbReference type="GO" id="GO:0005737">
    <property type="term" value="C:cytoplasm"/>
    <property type="evidence" value="ECO:0007669"/>
    <property type="project" value="UniProtKB-SubCell"/>
</dbReference>
<dbReference type="GO" id="GO:0008776">
    <property type="term" value="F:acetate kinase activity"/>
    <property type="evidence" value="ECO:0007669"/>
    <property type="project" value="TreeGrafter"/>
</dbReference>
<dbReference type="GO" id="GO:0005524">
    <property type="term" value="F:ATP binding"/>
    <property type="evidence" value="ECO:0007669"/>
    <property type="project" value="UniProtKB-KW"/>
</dbReference>
<dbReference type="GO" id="GO:0047761">
    <property type="term" value="F:butyrate kinase activity"/>
    <property type="evidence" value="ECO:0007669"/>
    <property type="project" value="UniProtKB-UniRule"/>
</dbReference>
<dbReference type="GO" id="GO:0006083">
    <property type="term" value="P:acetate metabolic process"/>
    <property type="evidence" value="ECO:0007669"/>
    <property type="project" value="TreeGrafter"/>
</dbReference>
<dbReference type="CDD" id="cd24011">
    <property type="entry name" value="ASKHA_NBD_BK"/>
    <property type="match status" value="1"/>
</dbReference>
<dbReference type="Gene3D" id="3.30.420.40">
    <property type="match status" value="2"/>
</dbReference>
<dbReference type="HAMAP" id="MF_00542">
    <property type="entry name" value="Butyrate_kinase"/>
    <property type="match status" value="1"/>
</dbReference>
<dbReference type="InterPro" id="IPR000890">
    <property type="entry name" value="Aliphatic_acid_kin_short-chain"/>
</dbReference>
<dbReference type="InterPro" id="IPR023865">
    <property type="entry name" value="Aliphatic_acid_kinase_CS"/>
</dbReference>
<dbReference type="InterPro" id="IPR043129">
    <property type="entry name" value="ATPase_NBD"/>
</dbReference>
<dbReference type="InterPro" id="IPR011245">
    <property type="entry name" value="Butyrate_kin"/>
</dbReference>
<dbReference type="NCBIfam" id="TIGR02707">
    <property type="entry name" value="butyr_kinase"/>
    <property type="match status" value="1"/>
</dbReference>
<dbReference type="NCBIfam" id="NF002834">
    <property type="entry name" value="PRK03011.1-5"/>
    <property type="match status" value="1"/>
</dbReference>
<dbReference type="PANTHER" id="PTHR21060">
    <property type="entry name" value="ACETATE KINASE"/>
    <property type="match status" value="1"/>
</dbReference>
<dbReference type="PANTHER" id="PTHR21060:SF3">
    <property type="entry name" value="BUTYRATE KINASE 2-RELATED"/>
    <property type="match status" value="1"/>
</dbReference>
<dbReference type="Pfam" id="PF00871">
    <property type="entry name" value="Acetate_kinase"/>
    <property type="match status" value="1"/>
</dbReference>
<dbReference type="PIRSF" id="PIRSF036458">
    <property type="entry name" value="Butyrate_kin"/>
    <property type="match status" value="1"/>
</dbReference>
<dbReference type="PRINTS" id="PR00471">
    <property type="entry name" value="ACETATEKNASE"/>
</dbReference>
<dbReference type="SUPFAM" id="SSF53067">
    <property type="entry name" value="Actin-like ATPase domain"/>
    <property type="match status" value="2"/>
</dbReference>
<dbReference type="PROSITE" id="PS01075">
    <property type="entry name" value="ACETATE_KINASE_1"/>
    <property type="match status" value="1"/>
</dbReference>
<dbReference type="PROSITE" id="PS01076">
    <property type="entry name" value="ACETATE_KINASE_2"/>
    <property type="match status" value="1"/>
</dbReference>
<protein>
    <recommendedName>
        <fullName evidence="1">Probable butyrate kinase 1</fullName>
        <shortName evidence="1">BK 1</shortName>
        <ecNumber evidence="1">2.7.2.7</ecNumber>
    </recommendedName>
    <alternativeName>
        <fullName evidence="1">Branched-chain carboxylic acid kinase 1</fullName>
    </alternativeName>
</protein>
<name>BUK1_CALS4</name>
<proteinExistence type="inferred from homology"/>
<gene>
    <name evidence="1" type="primary">buk1</name>
    <name type="synonym">buk</name>
    <name type="ordered locus">TTE2201</name>
</gene>
<organism>
    <name type="scientific">Caldanaerobacter subterraneus subsp. tengcongensis (strain DSM 15242 / JCM 11007 / NBRC 100824 / MB4)</name>
    <name type="common">Thermoanaerobacter tengcongensis</name>
    <dbReference type="NCBI Taxonomy" id="273068"/>
    <lineage>
        <taxon>Bacteria</taxon>
        <taxon>Bacillati</taxon>
        <taxon>Bacillota</taxon>
        <taxon>Clostridia</taxon>
        <taxon>Thermoanaerobacterales</taxon>
        <taxon>Thermoanaerobacteraceae</taxon>
        <taxon>Caldanaerobacter</taxon>
    </lineage>
</organism>
<accession>Q8R832</accession>
<comment type="catalytic activity">
    <reaction evidence="1">
        <text>butanoate + ATP = butanoyl phosphate + ADP</text>
        <dbReference type="Rhea" id="RHEA:13585"/>
        <dbReference type="ChEBI" id="CHEBI:17968"/>
        <dbReference type="ChEBI" id="CHEBI:30616"/>
        <dbReference type="ChEBI" id="CHEBI:58079"/>
        <dbReference type="ChEBI" id="CHEBI:456216"/>
        <dbReference type="EC" id="2.7.2.7"/>
    </reaction>
</comment>
<comment type="subcellular location">
    <subcellularLocation>
        <location evidence="1">Cytoplasm</location>
    </subcellularLocation>
</comment>
<comment type="similarity">
    <text evidence="1">Belongs to the acetokinase family.</text>
</comment>
<feature type="chain" id="PRO_0000107676" description="Probable butyrate kinase 1">
    <location>
        <begin position="1"/>
        <end position="357"/>
    </location>
</feature>
<evidence type="ECO:0000255" key="1">
    <source>
        <dbReference type="HAMAP-Rule" id="MF_00542"/>
    </source>
</evidence>
<sequence>MGLALILVINPGSTSTKVAVFRDKEPVFTETLRHSTEELSKYKRIIDQFEFRTQAILDMLKEKGISLSQIDAIVGRGGLLKPIESGTYIVNEKMLEDLKKAERGEHASNLGAIIAYTLAKEHNIPAYIVDPVVVDELEDVARITGLPEIEKQSIFHALNQKAIARRLASDLGKRYDEVNLIIAHLGGGISVGAHRKGRVIDVNDALNGEGPFSPERAGGLPVLDLVKLCYSGKYTFEEMKKKLIGKGGIVAHLGTNDVREVYKMIENGDKNAELILDAMAYQTAKEIGSMAVVLKGKVDAIGITGGIAHNEDFVRRIRERVEFIAPVYVYPGEDEMLALAEGAYRVLTGEENPKTYS</sequence>
<keyword id="KW-0067">ATP-binding</keyword>
<keyword id="KW-0963">Cytoplasm</keyword>
<keyword id="KW-0418">Kinase</keyword>
<keyword id="KW-0547">Nucleotide-binding</keyword>
<keyword id="KW-1185">Reference proteome</keyword>
<keyword id="KW-0808">Transferase</keyword>